<reference key="1">
    <citation type="journal article" date="2009" name="BMC Microbiol.">
        <title>The genome sequence of Geobacter metallireducens: features of metabolism, physiology and regulation common and dissimilar to Geobacter sulfurreducens.</title>
        <authorList>
            <person name="Aklujkar M."/>
            <person name="Krushkal J."/>
            <person name="DiBartolo G."/>
            <person name="Lapidus A."/>
            <person name="Land M.L."/>
            <person name="Lovley D.R."/>
        </authorList>
    </citation>
    <scope>NUCLEOTIDE SEQUENCE [LARGE SCALE GENOMIC DNA]</scope>
    <source>
        <strain>ATCC 53774 / DSM 7210 / GS-15</strain>
    </source>
</reference>
<proteinExistence type="inferred from homology"/>
<name>PYRC_GEOMG</name>
<protein>
    <recommendedName>
        <fullName evidence="1">Dihydroorotase</fullName>
        <shortName evidence="1">DHOase</shortName>
        <ecNumber evidence="1">3.5.2.3</ecNumber>
    </recommendedName>
</protein>
<gene>
    <name evidence="1" type="primary">pyrC</name>
    <name type="ordered locus">Gmet_1770</name>
</gene>
<feature type="chain" id="PRO_0000325594" description="Dihydroorotase">
    <location>
        <begin position="1"/>
        <end position="424"/>
    </location>
</feature>
<feature type="active site" evidence="1">
    <location>
        <position position="306"/>
    </location>
</feature>
<feature type="binding site" evidence="1">
    <location>
        <position position="61"/>
    </location>
    <ligand>
        <name>Zn(2+)</name>
        <dbReference type="ChEBI" id="CHEBI:29105"/>
        <label>1</label>
    </ligand>
</feature>
<feature type="binding site" evidence="1">
    <location>
        <begin position="63"/>
        <end position="65"/>
    </location>
    <ligand>
        <name>substrate</name>
    </ligand>
</feature>
<feature type="binding site" evidence="1">
    <location>
        <position position="63"/>
    </location>
    <ligand>
        <name>Zn(2+)</name>
        <dbReference type="ChEBI" id="CHEBI:29105"/>
        <label>1</label>
    </ligand>
</feature>
<feature type="binding site" evidence="1">
    <location>
        <position position="95"/>
    </location>
    <ligand>
        <name>substrate</name>
    </ligand>
</feature>
<feature type="binding site" evidence="1">
    <location>
        <position position="153"/>
    </location>
    <ligand>
        <name>Zn(2+)</name>
        <dbReference type="ChEBI" id="CHEBI:29105"/>
        <label>1</label>
    </ligand>
</feature>
<feature type="binding site" evidence="1">
    <location>
        <position position="153"/>
    </location>
    <ligand>
        <name>Zn(2+)</name>
        <dbReference type="ChEBI" id="CHEBI:29105"/>
        <label>2</label>
    </ligand>
</feature>
<feature type="binding site" evidence="1">
    <location>
        <position position="180"/>
    </location>
    <ligand>
        <name>Zn(2+)</name>
        <dbReference type="ChEBI" id="CHEBI:29105"/>
        <label>2</label>
    </ligand>
</feature>
<feature type="binding site" evidence="1">
    <location>
        <position position="233"/>
    </location>
    <ligand>
        <name>Zn(2+)</name>
        <dbReference type="ChEBI" id="CHEBI:29105"/>
        <label>2</label>
    </ligand>
</feature>
<feature type="binding site" evidence="1">
    <location>
        <position position="279"/>
    </location>
    <ligand>
        <name>substrate</name>
    </ligand>
</feature>
<feature type="binding site" evidence="1">
    <location>
        <position position="306"/>
    </location>
    <ligand>
        <name>Zn(2+)</name>
        <dbReference type="ChEBI" id="CHEBI:29105"/>
        <label>1</label>
    </ligand>
</feature>
<feature type="binding site" evidence="1">
    <location>
        <position position="310"/>
    </location>
    <ligand>
        <name>substrate</name>
    </ligand>
</feature>
<comment type="function">
    <text evidence="1">Catalyzes the reversible cyclization of carbamoyl aspartate to dihydroorotate.</text>
</comment>
<comment type="catalytic activity">
    <reaction evidence="1">
        <text>(S)-dihydroorotate + H2O = N-carbamoyl-L-aspartate + H(+)</text>
        <dbReference type="Rhea" id="RHEA:24296"/>
        <dbReference type="ChEBI" id="CHEBI:15377"/>
        <dbReference type="ChEBI" id="CHEBI:15378"/>
        <dbReference type="ChEBI" id="CHEBI:30864"/>
        <dbReference type="ChEBI" id="CHEBI:32814"/>
        <dbReference type="EC" id="3.5.2.3"/>
    </reaction>
</comment>
<comment type="cofactor">
    <cofactor evidence="1">
        <name>Zn(2+)</name>
        <dbReference type="ChEBI" id="CHEBI:29105"/>
    </cofactor>
    <text evidence="1">Binds 2 Zn(2+) ions per subunit.</text>
</comment>
<comment type="pathway">
    <text evidence="1">Pyrimidine metabolism; UMP biosynthesis via de novo pathway; (S)-dihydroorotate from bicarbonate: step 3/3.</text>
</comment>
<comment type="similarity">
    <text evidence="1">Belongs to the metallo-dependent hydrolases superfamily. DHOase family. Class I DHOase subfamily.</text>
</comment>
<comment type="sequence caution" evidence="2">
    <conflict type="erroneous initiation">
        <sequence resource="EMBL-CDS" id="ABB32001"/>
    </conflict>
</comment>
<dbReference type="EC" id="3.5.2.3" evidence="1"/>
<dbReference type="EMBL" id="CP000148">
    <property type="protein sequence ID" value="ABB32001.1"/>
    <property type="status" value="ALT_INIT"/>
    <property type="molecule type" value="Genomic_DNA"/>
</dbReference>
<dbReference type="RefSeq" id="WP_004513333.1">
    <property type="nucleotide sequence ID" value="NC_007517.1"/>
</dbReference>
<dbReference type="SMR" id="Q39US3"/>
<dbReference type="STRING" id="269799.Gmet_1770"/>
<dbReference type="KEGG" id="gme:Gmet_1770"/>
<dbReference type="eggNOG" id="COG0044">
    <property type="taxonomic scope" value="Bacteria"/>
</dbReference>
<dbReference type="HOGENOM" id="CLU_015572_1_0_7"/>
<dbReference type="UniPathway" id="UPA00070">
    <property type="reaction ID" value="UER00117"/>
</dbReference>
<dbReference type="Proteomes" id="UP000007073">
    <property type="component" value="Chromosome"/>
</dbReference>
<dbReference type="GO" id="GO:0005737">
    <property type="term" value="C:cytoplasm"/>
    <property type="evidence" value="ECO:0007669"/>
    <property type="project" value="TreeGrafter"/>
</dbReference>
<dbReference type="GO" id="GO:0004038">
    <property type="term" value="F:allantoinase activity"/>
    <property type="evidence" value="ECO:0007669"/>
    <property type="project" value="TreeGrafter"/>
</dbReference>
<dbReference type="GO" id="GO:0004151">
    <property type="term" value="F:dihydroorotase activity"/>
    <property type="evidence" value="ECO:0007669"/>
    <property type="project" value="UniProtKB-UniRule"/>
</dbReference>
<dbReference type="GO" id="GO:0008270">
    <property type="term" value="F:zinc ion binding"/>
    <property type="evidence" value="ECO:0007669"/>
    <property type="project" value="UniProtKB-UniRule"/>
</dbReference>
<dbReference type="GO" id="GO:0044205">
    <property type="term" value="P:'de novo' UMP biosynthetic process"/>
    <property type="evidence" value="ECO:0007669"/>
    <property type="project" value="UniProtKB-UniRule"/>
</dbReference>
<dbReference type="GO" id="GO:0006145">
    <property type="term" value="P:purine nucleobase catabolic process"/>
    <property type="evidence" value="ECO:0007669"/>
    <property type="project" value="TreeGrafter"/>
</dbReference>
<dbReference type="CDD" id="cd01317">
    <property type="entry name" value="DHOase_IIa"/>
    <property type="match status" value="1"/>
</dbReference>
<dbReference type="Gene3D" id="3.20.20.140">
    <property type="entry name" value="Metal-dependent hydrolases"/>
    <property type="match status" value="1"/>
</dbReference>
<dbReference type="Gene3D" id="2.30.40.10">
    <property type="entry name" value="Urease, subunit C, domain 1"/>
    <property type="match status" value="1"/>
</dbReference>
<dbReference type="HAMAP" id="MF_00220_B">
    <property type="entry name" value="PyrC_classI_B"/>
    <property type="match status" value="1"/>
</dbReference>
<dbReference type="InterPro" id="IPR006680">
    <property type="entry name" value="Amidohydro-rel"/>
</dbReference>
<dbReference type="InterPro" id="IPR004722">
    <property type="entry name" value="DHOase"/>
</dbReference>
<dbReference type="InterPro" id="IPR050138">
    <property type="entry name" value="DHOase/Allantoinase_Hydrolase"/>
</dbReference>
<dbReference type="InterPro" id="IPR002195">
    <property type="entry name" value="Dihydroorotase_CS"/>
</dbReference>
<dbReference type="InterPro" id="IPR011059">
    <property type="entry name" value="Metal-dep_hydrolase_composite"/>
</dbReference>
<dbReference type="InterPro" id="IPR032466">
    <property type="entry name" value="Metal_Hydrolase"/>
</dbReference>
<dbReference type="NCBIfam" id="TIGR00857">
    <property type="entry name" value="pyrC_multi"/>
    <property type="match status" value="1"/>
</dbReference>
<dbReference type="PANTHER" id="PTHR43668">
    <property type="entry name" value="ALLANTOINASE"/>
    <property type="match status" value="1"/>
</dbReference>
<dbReference type="PANTHER" id="PTHR43668:SF2">
    <property type="entry name" value="ALLANTOINASE"/>
    <property type="match status" value="1"/>
</dbReference>
<dbReference type="Pfam" id="PF01979">
    <property type="entry name" value="Amidohydro_1"/>
    <property type="match status" value="1"/>
</dbReference>
<dbReference type="SUPFAM" id="SSF51338">
    <property type="entry name" value="Composite domain of metallo-dependent hydrolases"/>
    <property type="match status" value="1"/>
</dbReference>
<dbReference type="SUPFAM" id="SSF51556">
    <property type="entry name" value="Metallo-dependent hydrolases"/>
    <property type="match status" value="1"/>
</dbReference>
<dbReference type="PROSITE" id="PS00482">
    <property type="entry name" value="DIHYDROOROTASE_1"/>
    <property type="match status" value="1"/>
</dbReference>
<dbReference type="PROSITE" id="PS00483">
    <property type="entry name" value="DIHYDROOROTASE_2"/>
    <property type="match status" value="1"/>
</dbReference>
<sequence length="424" mass="44713">MNLLIQGGRVIDPSQGIDEVLDILVENGAVKELGKGVKAPSGTETIDASGLIVTPGLIDMHVHLRDPGHEYKEDIVSGTKAAAAGGFTSVACMPNTKPVNDNKAVTSYIIAKAKAEGSVNVFPVGSITQGSKGELLSEMGELKESGCVAVSDDGHPVTNSELMRRALEYAKGMGIMVISHAEDLSLVGAGVMNEGFVSTELGLKGIPWAAEDAATARDVYLAEFTDSPLHIAHVSTKGSLRIIRNAKARGVKVTCETAPHYFSLTDDAVRGYDTNAKMNPPLRTADDVTAVKEALKDGTIDAIATDHAPHHIDEKDLEFNEALNGIVGLETSLTLSLRLVEEGVLTLPVLVDKMACNPAKILGIDRGTLKPGSVADITVIDPKATWTVDADKLASKSKNSPFLGWEVKGAAAFTIVGGKVVYKR</sequence>
<accession>Q39US3</accession>
<keyword id="KW-0378">Hydrolase</keyword>
<keyword id="KW-0479">Metal-binding</keyword>
<keyword id="KW-0665">Pyrimidine biosynthesis</keyword>
<keyword id="KW-1185">Reference proteome</keyword>
<keyword id="KW-0862">Zinc</keyword>
<organism>
    <name type="scientific">Geobacter metallireducens (strain ATCC 53774 / DSM 7210 / GS-15)</name>
    <dbReference type="NCBI Taxonomy" id="269799"/>
    <lineage>
        <taxon>Bacteria</taxon>
        <taxon>Pseudomonadati</taxon>
        <taxon>Thermodesulfobacteriota</taxon>
        <taxon>Desulfuromonadia</taxon>
        <taxon>Geobacterales</taxon>
        <taxon>Geobacteraceae</taxon>
        <taxon>Geobacter</taxon>
    </lineage>
</organism>
<evidence type="ECO:0000255" key="1">
    <source>
        <dbReference type="HAMAP-Rule" id="MF_00220"/>
    </source>
</evidence>
<evidence type="ECO:0000305" key="2"/>